<feature type="chain" id="PRO_0000070905" description="Chaperone protein DnaJ">
    <location>
        <begin position="1"/>
        <end position="378"/>
    </location>
</feature>
<feature type="domain" description="J" evidence="1">
    <location>
        <begin position="5"/>
        <end position="69"/>
    </location>
</feature>
<feature type="repeat" description="CXXCXGXG motif">
    <location>
        <begin position="147"/>
        <end position="154"/>
    </location>
</feature>
<feature type="repeat" description="CXXCXGXG motif">
    <location>
        <begin position="164"/>
        <end position="171"/>
    </location>
</feature>
<feature type="repeat" description="CXXCXGXG motif">
    <location>
        <begin position="190"/>
        <end position="197"/>
    </location>
</feature>
<feature type="repeat" description="CXXCXGXG motif">
    <location>
        <begin position="204"/>
        <end position="211"/>
    </location>
</feature>
<feature type="zinc finger region" description="CR-type" evidence="1">
    <location>
        <begin position="134"/>
        <end position="216"/>
    </location>
</feature>
<feature type="binding site" evidence="1">
    <location>
        <position position="147"/>
    </location>
    <ligand>
        <name>Zn(2+)</name>
        <dbReference type="ChEBI" id="CHEBI:29105"/>
        <label>1</label>
    </ligand>
</feature>
<feature type="binding site" evidence="1">
    <location>
        <position position="150"/>
    </location>
    <ligand>
        <name>Zn(2+)</name>
        <dbReference type="ChEBI" id="CHEBI:29105"/>
        <label>1</label>
    </ligand>
</feature>
<feature type="binding site" evidence="1">
    <location>
        <position position="164"/>
    </location>
    <ligand>
        <name>Zn(2+)</name>
        <dbReference type="ChEBI" id="CHEBI:29105"/>
        <label>2</label>
    </ligand>
</feature>
<feature type="binding site" evidence="1">
    <location>
        <position position="167"/>
    </location>
    <ligand>
        <name>Zn(2+)</name>
        <dbReference type="ChEBI" id="CHEBI:29105"/>
        <label>2</label>
    </ligand>
</feature>
<feature type="binding site" evidence="1">
    <location>
        <position position="190"/>
    </location>
    <ligand>
        <name>Zn(2+)</name>
        <dbReference type="ChEBI" id="CHEBI:29105"/>
        <label>2</label>
    </ligand>
</feature>
<feature type="binding site" evidence="1">
    <location>
        <position position="193"/>
    </location>
    <ligand>
        <name>Zn(2+)</name>
        <dbReference type="ChEBI" id="CHEBI:29105"/>
        <label>2</label>
    </ligand>
</feature>
<feature type="binding site" evidence="1">
    <location>
        <position position="204"/>
    </location>
    <ligand>
        <name>Zn(2+)</name>
        <dbReference type="ChEBI" id="CHEBI:29105"/>
        <label>1</label>
    </ligand>
</feature>
<feature type="binding site" evidence="1">
    <location>
        <position position="207"/>
    </location>
    <ligand>
        <name>Zn(2+)</name>
        <dbReference type="ChEBI" id="CHEBI:29105"/>
        <label>1</label>
    </ligand>
</feature>
<keyword id="KW-0143">Chaperone</keyword>
<keyword id="KW-0963">Cytoplasm</keyword>
<keyword id="KW-0235">DNA replication</keyword>
<keyword id="KW-0479">Metal-binding</keyword>
<keyword id="KW-0677">Repeat</keyword>
<keyword id="KW-0346">Stress response</keyword>
<keyword id="KW-0862">Zinc</keyword>
<keyword id="KW-0863">Zinc-finger</keyword>
<accession>P0DA70</accession>
<accession>Q879J5</accession>
<accession>Q8K625</accession>
<evidence type="ECO:0000255" key="1">
    <source>
        <dbReference type="HAMAP-Rule" id="MF_01152"/>
    </source>
</evidence>
<evidence type="ECO:0000305" key="2"/>
<organism>
    <name type="scientific">Streptococcus pyogenes serotype M3 (strain ATCC BAA-595 / MGAS315)</name>
    <dbReference type="NCBI Taxonomy" id="198466"/>
    <lineage>
        <taxon>Bacteria</taxon>
        <taxon>Bacillati</taxon>
        <taxon>Bacillota</taxon>
        <taxon>Bacilli</taxon>
        <taxon>Lactobacillales</taxon>
        <taxon>Streptococcaceae</taxon>
        <taxon>Streptococcus</taxon>
    </lineage>
</organism>
<proteinExistence type="inferred from homology"/>
<name>DNAJ_STRP3</name>
<comment type="function">
    <text evidence="1">Participates actively in the response to hyperosmotic and heat shock by preventing the aggregation of stress-denatured proteins and by disaggregating proteins, also in an autonomous, DnaK-independent fashion. Unfolded proteins bind initially to DnaJ; upon interaction with the DnaJ-bound protein, DnaK hydrolyzes its bound ATP, resulting in the formation of a stable complex. GrpE releases ADP from DnaK; ATP binding to DnaK triggers the release of the substrate protein, thus completing the reaction cycle. Several rounds of ATP-dependent interactions between DnaJ, DnaK and GrpE are required for fully efficient folding. Also involved, together with DnaK and GrpE, in the DNA replication of plasmids through activation of initiation proteins.</text>
</comment>
<comment type="cofactor">
    <cofactor evidence="1">
        <name>Zn(2+)</name>
        <dbReference type="ChEBI" id="CHEBI:29105"/>
    </cofactor>
    <text evidence="1">Binds 2 Zn(2+) ions per monomer.</text>
</comment>
<comment type="subunit">
    <text evidence="1">Homodimer.</text>
</comment>
<comment type="subcellular location">
    <subcellularLocation>
        <location evidence="1">Cytoplasm</location>
    </subcellularLocation>
</comment>
<comment type="domain">
    <text evidence="1">The J domain is necessary and sufficient to stimulate DnaK ATPase activity. Zinc center 1 plays an important role in the autonomous, DnaK-independent chaperone activity of DnaJ. Zinc center 2 is essential for interaction with DnaK and for DnaJ activity.</text>
</comment>
<comment type="similarity">
    <text evidence="1">Belongs to the DnaJ family.</text>
</comment>
<comment type="sequence caution" evidence="2">
    <conflict type="erroneous initiation">
        <sequence resource="EMBL-CDS" id="AAM80137"/>
    </conflict>
</comment>
<reference key="1">
    <citation type="journal article" date="2002" name="Proc. Natl. Acad. Sci. U.S.A.">
        <title>Genome sequence of a serotype M3 strain of group A Streptococcus: phage-encoded toxins, the high-virulence phenotype, and clone emergence.</title>
        <authorList>
            <person name="Beres S.B."/>
            <person name="Sylva G.L."/>
            <person name="Barbian K.D."/>
            <person name="Lei B."/>
            <person name="Hoff J.S."/>
            <person name="Mammarella N.D."/>
            <person name="Liu M.-Y."/>
            <person name="Smoot J.C."/>
            <person name="Porcella S.F."/>
            <person name="Parkins L.D."/>
            <person name="Campbell D.S."/>
            <person name="Smith T.M."/>
            <person name="McCormick J.K."/>
            <person name="Leung D.Y.M."/>
            <person name="Schlievert P.M."/>
            <person name="Musser J.M."/>
        </authorList>
    </citation>
    <scope>NUCLEOTIDE SEQUENCE [LARGE SCALE GENOMIC DNA]</scope>
    <source>
        <strain>ATCC BAA-595 / MGAS315</strain>
    </source>
</reference>
<dbReference type="EMBL" id="AE014074">
    <property type="protein sequence ID" value="AAM80137.1"/>
    <property type="status" value="ALT_INIT"/>
    <property type="molecule type" value="Genomic_DNA"/>
</dbReference>
<dbReference type="RefSeq" id="WP_002993772.1">
    <property type="nucleotide sequence ID" value="NC_004070.1"/>
</dbReference>
<dbReference type="SMR" id="P0DA70"/>
<dbReference type="GeneID" id="69900395"/>
<dbReference type="KEGG" id="spg:SpyM3_1530"/>
<dbReference type="HOGENOM" id="CLU_017633_0_7_9"/>
<dbReference type="Proteomes" id="UP000000564">
    <property type="component" value="Chromosome"/>
</dbReference>
<dbReference type="GO" id="GO:0005737">
    <property type="term" value="C:cytoplasm"/>
    <property type="evidence" value="ECO:0007669"/>
    <property type="project" value="UniProtKB-SubCell"/>
</dbReference>
<dbReference type="GO" id="GO:0005524">
    <property type="term" value="F:ATP binding"/>
    <property type="evidence" value="ECO:0007669"/>
    <property type="project" value="InterPro"/>
</dbReference>
<dbReference type="GO" id="GO:0031072">
    <property type="term" value="F:heat shock protein binding"/>
    <property type="evidence" value="ECO:0007669"/>
    <property type="project" value="InterPro"/>
</dbReference>
<dbReference type="GO" id="GO:0051082">
    <property type="term" value="F:unfolded protein binding"/>
    <property type="evidence" value="ECO:0007669"/>
    <property type="project" value="UniProtKB-UniRule"/>
</dbReference>
<dbReference type="GO" id="GO:0008270">
    <property type="term" value="F:zinc ion binding"/>
    <property type="evidence" value="ECO:0007669"/>
    <property type="project" value="UniProtKB-UniRule"/>
</dbReference>
<dbReference type="GO" id="GO:0051085">
    <property type="term" value="P:chaperone cofactor-dependent protein refolding"/>
    <property type="evidence" value="ECO:0007669"/>
    <property type="project" value="TreeGrafter"/>
</dbReference>
<dbReference type="GO" id="GO:0006260">
    <property type="term" value="P:DNA replication"/>
    <property type="evidence" value="ECO:0007669"/>
    <property type="project" value="UniProtKB-KW"/>
</dbReference>
<dbReference type="GO" id="GO:0042026">
    <property type="term" value="P:protein refolding"/>
    <property type="evidence" value="ECO:0007669"/>
    <property type="project" value="TreeGrafter"/>
</dbReference>
<dbReference type="GO" id="GO:0009408">
    <property type="term" value="P:response to heat"/>
    <property type="evidence" value="ECO:0007669"/>
    <property type="project" value="InterPro"/>
</dbReference>
<dbReference type="CDD" id="cd06257">
    <property type="entry name" value="DnaJ"/>
    <property type="match status" value="1"/>
</dbReference>
<dbReference type="CDD" id="cd10747">
    <property type="entry name" value="DnaJ_C"/>
    <property type="match status" value="1"/>
</dbReference>
<dbReference type="CDD" id="cd10719">
    <property type="entry name" value="DnaJ_zf"/>
    <property type="match status" value="1"/>
</dbReference>
<dbReference type="FunFam" id="1.10.287.110:FF:000031">
    <property type="entry name" value="Molecular chaperone DnaJ"/>
    <property type="match status" value="1"/>
</dbReference>
<dbReference type="FunFam" id="2.10.230.10:FF:000002">
    <property type="entry name" value="Molecular chaperone DnaJ"/>
    <property type="match status" value="1"/>
</dbReference>
<dbReference type="FunFam" id="2.60.260.20:FF:000004">
    <property type="entry name" value="Molecular chaperone DnaJ"/>
    <property type="match status" value="1"/>
</dbReference>
<dbReference type="Gene3D" id="1.10.287.110">
    <property type="entry name" value="DnaJ domain"/>
    <property type="match status" value="1"/>
</dbReference>
<dbReference type="Gene3D" id="2.10.230.10">
    <property type="entry name" value="Heat shock protein DnaJ, cysteine-rich domain"/>
    <property type="match status" value="1"/>
</dbReference>
<dbReference type="Gene3D" id="2.60.260.20">
    <property type="entry name" value="Urease metallochaperone UreE, N-terminal domain"/>
    <property type="match status" value="2"/>
</dbReference>
<dbReference type="HAMAP" id="MF_01152">
    <property type="entry name" value="DnaJ"/>
    <property type="match status" value="1"/>
</dbReference>
<dbReference type="InterPro" id="IPR012724">
    <property type="entry name" value="DnaJ"/>
</dbReference>
<dbReference type="InterPro" id="IPR002939">
    <property type="entry name" value="DnaJ_C"/>
</dbReference>
<dbReference type="InterPro" id="IPR001623">
    <property type="entry name" value="DnaJ_domain"/>
</dbReference>
<dbReference type="InterPro" id="IPR018253">
    <property type="entry name" value="DnaJ_domain_CS"/>
</dbReference>
<dbReference type="InterPro" id="IPR008971">
    <property type="entry name" value="HSP40/DnaJ_pept-bd"/>
</dbReference>
<dbReference type="InterPro" id="IPR001305">
    <property type="entry name" value="HSP_DnaJ_Cys-rich_dom"/>
</dbReference>
<dbReference type="InterPro" id="IPR036410">
    <property type="entry name" value="HSP_DnaJ_Cys-rich_dom_sf"/>
</dbReference>
<dbReference type="InterPro" id="IPR036869">
    <property type="entry name" value="J_dom_sf"/>
</dbReference>
<dbReference type="NCBIfam" id="TIGR02349">
    <property type="entry name" value="DnaJ_bact"/>
    <property type="match status" value="1"/>
</dbReference>
<dbReference type="NCBIfam" id="NF008035">
    <property type="entry name" value="PRK10767.1"/>
    <property type="match status" value="1"/>
</dbReference>
<dbReference type="NCBIfam" id="NF010869">
    <property type="entry name" value="PRK14276.1"/>
    <property type="match status" value="1"/>
</dbReference>
<dbReference type="PANTHER" id="PTHR43096:SF48">
    <property type="entry name" value="CHAPERONE PROTEIN DNAJ"/>
    <property type="match status" value="1"/>
</dbReference>
<dbReference type="PANTHER" id="PTHR43096">
    <property type="entry name" value="DNAJ HOMOLOG 1, MITOCHONDRIAL-RELATED"/>
    <property type="match status" value="1"/>
</dbReference>
<dbReference type="Pfam" id="PF00226">
    <property type="entry name" value="DnaJ"/>
    <property type="match status" value="1"/>
</dbReference>
<dbReference type="Pfam" id="PF01556">
    <property type="entry name" value="DnaJ_C"/>
    <property type="match status" value="1"/>
</dbReference>
<dbReference type="Pfam" id="PF00684">
    <property type="entry name" value="DnaJ_CXXCXGXG"/>
    <property type="match status" value="1"/>
</dbReference>
<dbReference type="PRINTS" id="PR00625">
    <property type="entry name" value="JDOMAIN"/>
</dbReference>
<dbReference type="SMART" id="SM00271">
    <property type="entry name" value="DnaJ"/>
    <property type="match status" value="1"/>
</dbReference>
<dbReference type="SUPFAM" id="SSF46565">
    <property type="entry name" value="Chaperone J-domain"/>
    <property type="match status" value="1"/>
</dbReference>
<dbReference type="SUPFAM" id="SSF57938">
    <property type="entry name" value="DnaJ/Hsp40 cysteine-rich domain"/>
    <property type="match status" value="1"/>
</dbReference>
<dbReference type="SUPFAM" id="SSF49493">
    <property type="entry name" value="HSP40/DnaJ peptide-binding domain"/>
    <property type="match status" value="2"/>
</dbReference>
<dbReference type="PROSITE" id="PS00636">
    <property type="entry name" value="DNAJ_1"/>
    <property type="match status" value="1"/>
</dbReference>
<dbReference type="PROSITE" id="PS50076">
    <property type="entry name" value="DNAJ_2"/>
    <property type="match status" value="1"/>
</dbReference>
<dbReference type="PROSITE" id="PS51188">
    <property type="entry name" value="ZF_CR"/>
    <property type="match status" value="1"/>
</dbReference>
<sequence>MNNTEYYDRLGVSKDASQDDIKKAYRKMSKKYHPDINKEAGAEQKYKDVQEAYETLSDSQKRAAYDQYGAAGAQGGFGGGAGGFGGFDGGGFGGFEDIFSSFFGGGGSRNPNAPRQGDDLQYRVNLSFEEAVFGVEKEVSYNREATCGTCLGSGAKPGTAPVTCRKCHGSGVMTIDTQTPLGMMRRQVTCDICHGSGKEIKEPCQTCHGTGHEKQAHKVSVKIPAGVETGQQIRLQGQGEAGFNGGPYGDLFVILNVLPSKQFERNGSTIYYNLDISFTQAALGDTVEIPTVHGDVEMAIPAGTQTGKTFRLKGKGAPKLRGGGQGDQHVTVNIVTPTKLNDAQREALQAFAEASGEKMLHPKKKGFFDKVKDALEDI</sequence>
<protein>
    <recommendedName>
        <fullName evidence="1">Chaperone protein DnaJ</fullName>
    </recommendedName>
</protein>
<gene>
    <name evidence="1" type="primary">dnaJ</name>
    <name type="ordered locus">SpyM3_1530</name>
</gene>